<organism>
    <name type="scientific">Tolumonas auensis (strain DSM 9187 / NBRC 110442 / TA 4)</name>
    <dbReference type="NCBI Taxonomy" id="595494"/>
    <lineage>
        <taxon>Bacteria</taxon>
        <taxon>Pseudomonadati</taxon>
        <taxon>Pseudomonadota</taxon>
        <taxon>Gammaproteobacteria</taxon>
        <taxon>Aeromonadales</taxon>
        <taxon>Aeromonadaceae</taxon>
        <taxon>Tolumonas</taxon>
    </lineage>
</organism>
<protein>
    <recommendedName>
        <fullName evidence="1">3-dehydroquinate synthase</fullName>
        <shortName evidence="1">DHQS</shortName>
        <ecNumber evidence="1">4.2.3.4</ecNumber>
    </recommendedName>
</protein>
<reference key="1">
    <citation type="submission" date="2009-05" db="EMBL/GenBank/DDBJ databases">
        <title>Complete sequence of Tolumonas auensis DSM 9187.</title>
        <authorList>
            <consortium name="US DOE Joint Genome Institute"/>
            <person name="Lucas S."/>
            <person name="Copeland A."/>
            <person name="Lapidus A."/>
            <person name="Glavina del Rio T."/>
            <person name="Tice H."/>
            <person name="Bruce D."/>
            <person name="Goodwin L."/>
            <person name="Pitluck S."/>
            <person name="Chertkov O."/>
            <person name="Brettin T."/>
            <person name="Detter J.C."/>
            <person name="Han C."/>
            <person name="Larimer F."/>
            <person name="Land M."/>
            <person name="Hauser L."/>
            <person name="Kyrpides N."/>
            <person name="Mikhailova N."/>
            <person name="Spring S."/>
            <person name="Beller H."/>
        </authorList>
    </citation>
    <scope>NUCLEOTIDE SEQUENCE [LARGE SCALE GENOMIC DNA]</scope>
    <source>
        <strain>DSM 9187 / NBRC 110442 / TA 4</strain>
    </source>
</reference>
<gene>
    <name evidence="1" type="primary">aroB</name>
    <name type="ordered locus">Tola_2616</name>
</gene>
<sequence length="358" mass="38450">METLTVNLAERSYPIYVGAGLLTSSALFAPHIAGQRVMIVTNDTVAPLYLDVLRKTLAGYQIDTLILPDGEAHKTLASFEVIMSALLKGTHGRDTTLIALGGGVIGDLVGFAAACYQRGVPFIQVPTTLLSQVDSSVGGKTAVNHPLGKNMIGAFYQPKAVIIDIDCLRTLPSRELAAGMAEVIKYGIIWDADFFSWLEQHISDIQSLSPDALSKIILRCCAIKADVVAQDETENGVRALLNLGHTFGHAIEAEQGYGKWLHGEAVAAGTVQAAETSLRLGLLSDTDVSRIKALLKAANLPVTAPADMTYDDYIHHMLRDKKAKAGKLRLVLPQAIGRADLFTDVEQTVLRAVIDATH</sequence>
<evidence type="ECO:0000255" key="1">
    <source>
        <dbReference type="HAMAP-Rule" id="MF_00110"/>
    </source>
</evidence>
<dbReference type="EC" id="4.2.3.4" evidence="1"/>
<dbReference type="EMBL" id="CP001616">
    <property type="protein sequence ID" value="ACQ94210.1"/>
    <property type="molecule type" value="Genomic_DNA"/>
</dbReference>
<dbReference type="RefSeq" id="WP_015879659.1">
    <property type="nucleotide sequence ID" value="NC_012691.1"/>
</dbReference>
<dbReference type="SMR" id="C4LB07"/>
<dbReference type="STRING" id="595494.Tola_2616"/>
<dbReference type="KEGG" id="tau:Tola_2616"/>
<dbReference type="eggNOG" id="COG0337">
    <property type="taxonomic scope" value="Bacteria"/>
</dbReference>
<dbReference type="HOGENOM" id="CLU_001201_0_2_6"/>
<dbReference type="OrthoDB" id="9806583at2"/>
<dbReference type="UniPathway" id="UPA00053">
    <property type="reaction ID" value="UER00085"/>
</dbReference>
<dbReference type="Proteomes" id="UP000009073">
    <property type="component" value="Chromosome"/>
</dbReference>
<dbReference type="GO" id="GO:0005737">
    <property type="term" value="C:cytoplasm"/>
    <property type="evidence" value="ECO:0007669"/>
    <property type="project" value="UniProtKB-SubCell"/>
</dbReference>
<dbReference type="GO" id="GO:0003856">
    <property type="term" value="F:3-dehydroquinate synthase activity"/>
    <property type="evidence" value="ECO:0007669"/>
    <property type="project" value="UniProtKB-UniRule"/>
</dbReference>
<dbReference type="GO" id="GO:0046872">
    <property type="term" value="F:metal ion binding"/>
    <property type="evidence" value="ECO:0007669"/>
    <property type="project" value="UniProtKB-KW"/>
</dbReference>
<dbReference type="GO" id="GO:0000166">
    <property type="term" value="F:nucleotide binding"/>
    <property type="evidence" value="ECO:0007669"/>
    <property type="project" value="UniProtKB-KW"/>
</dbReference>
<dbReference type="GO" id="GO:0008652">
    <property type="term" value="P:amino acid biosynthetic process"/>
    <property type="evidence" value="ECO:0007669"/>
    <property type="project" value="UniProtKB-KW"/>
</dbReference>
<dbReference type="GO" id="GO:0009073">
    <property type="term" value="P:aromatic amino acid family biosynthetic process"/>
    <property type="evidence" value="ECO:0007669"/>
    <property type="project" value="UniProtKB-KW"/>
</dbReference>
<dbReference type="GO" id="GO:0009423">
    <property type="term" value="P:chorismate biosynthetic process"/>
    <property type="evidence" value="ECO:0007669"/>
    <property type="project" value="UniProtKB-UniRule"/>
</dbReference>
<dbReference type="CDD" id="cd08195">
    <property type="entry name" value="DHQS"/>
    <property type="match status" value="1"/>
</dbReference>
<dbReference type="FunFam" id="1.20.1090.10:FF:000002">
    <property type="entry name" value="3-dehydroquinate synthase"/>
    <property type="match status" value="1"/>
</dbReference>
<dbReference type="FunFam" id="3.40.50.1970:FF:000001">
    <property type="entry name" value="3-dehydroquinate synthase"/>
    <property type="match status" value="1"/>
</dbReference>
<dbReference type="Gene3D" id="3.40.50.1970">
    <property type="match status" value="1"/>
</dbReference>
<dbReference type="Gene3D" id="1.20.1090.10">
    <property type="entry name" value="Dehydroquinate synthase-like - alpha domain"/>
    <property type="match status" value="1"/>
</dbReference>
<dbReference type="HAMAP" id="MF_00110">
    <property type="entry name" value="DHQ_synthase"/>
    <property type="match status" value="1"/>
</dbReference>
<dbReference type="InterPro" id="IPR050071">
    <property type="entry name" value="Dehydroquinate_synthase"/>
</dbReference>
<dbReference type="InterPro" id="IPR016037">
    <property type="entry name" value="DHQ_synth_AroB"/>
</dbReference>
<dbReference type="InterPro" id="IPR030963">
    <property type="entry name" value="DHQ_synth_fam"/>
</dbReference>
<dbReference type="InterPro" id="IPR030960">
    <property type="entry name" value="DHQS/DOIS_N"/>
</dbReference>
<dbReference type="InterPro" id="IPR056179">
    <property type="entry name" value="DHQS_C"/>
</dbReference>
<dbReference type="NCBIfam" id="TIGR01357">
    <property type="entry name" value="aroB"/>
    <property type="match status" value="1"/>
</dbReference>
<dbReference type="PANTHER" id="PTHR43622">
    <property type="entry name" value="3-DEHYDROQUINATE SYNTHASE"/>
    <property type="match status" value="1"/>
</dbReference>
<dbReference type="PANTHER" id="PTHR43622:SF7">
    <property type="entry name" value="3-DEHYDROQUINATE SYNTHASE, CHLOROPLASTIC"/>
    <property type="match status" value="1"/>
</dbReference>
<dbReference type="Pfam" id="PF01761">
    <property type="entry name" value="DHQ_synthase"/>
    <property type="match status" value="1"/>
</dbReference>
<dbReference type="Pfam" id="PF24621">
    <property type="entry name" value="DHQS_C"/>
    <property type="match status" value="1"/>
</dbReference>
<dbReference type="PIRSF" id="PIRSF001455">
    <property type="entry name" value="DHQ_synth"/>
    <property type="match status" value="1"/>
</dbReference>
<dbReference type="SUPFAM" id="SSF56796">
    <property type="entry name" value="Dehydroquinate synthase-like"/>
    <property type="match status" value="1"/>
</dbReference>
<keyword id="KW-0028">Amino-acid biosynthesis</keyword>
<keyword id="KW-0057">Aromatic amino acid biosynthesis</keyword>
<keyword id="KW-0170">Cobalt</keyword>
<keyword id="KW-0963">Cytoplasm</keyword>
<keyword id="KW-0456">Lyase</keyword>
<keyword id="KW-0479">Metal-binding</keyword>
<keyword id="KW-0520">NAD</keyword>
<keyword id="KW-0547">Nucleotide-binding</keyword>
<keyword id="KW-1185">Reference proteome</keyword>
<keyword id="KW-0862">Zinc</keyword>
<proteinExistence type="inferred from homology"/>
<comment type="function">
    <text evidence="1">Catalyzes the conversion of 3-deoxy-D-arabino-heptulosonate 7-phosphate (DAHP) to dehydroquinate (DHQ).</text>
</comment>
<comment type="catalytic activity">
    <reaction evidence="1">
        <text>7-phospho-2-dehydro-3-deoxy-D-arabino-heptonate = 3-dehydroquinate + phosphate</text>
        <dbReference type="Rhea" id="RHEA:21968"/>
        <dbReference type="ChEBI" id="CHEBI:32364"/>
        <dbReference type="ChEBI" id="CHEBI:43474"/>
        <dbReference type="ChEBI" id="CHEBI:58394"/>
        <dbReference type="EC" id="4.2.3.4"/>
    </reaction>
</comment>
<comment type="cofactor">
    <cofactor evidence="1">
        <name>Co(2+)</name>
        <dbReference type="ChEBI" id="CHEBI:48828"/>
    </cofactor>
    <cofactor evidence="1">
        <name>Zn(2+)</name>
        <dbReference type="ChEBI" id="CHEBI:29105"/>
    </cofactor>
    <text evidence="1">Binds 1 divalent metal cation per subunit. Can use either Co(2+) or Zn(2+).</text>
</comment>
<comment type="cofactor">
    <cofactor evidence="1">
        <name>NAD(+)</name>
        <dbReference type="ChEBI" id="CHEBI:57540"/>
    </cofactor>
</comment>
<comment type="pathway">
    <text evidence="1">Metabolic intermediate biosynthesis; chorismate biosynthesis; chorismate from D-erythrose 4-phosphate and phosphoenolpyruvate: step 2/7.</text>
</comment>
<comment type="subcellular location">
    <subcellularLocation>
        <location evidence="1">Cytoplasm</location>
    </subcellularLocation>
</comment>
<comment type="similarity">
    <text evidence="1">Belongs to the sugar phosphate cyclases superfamily. Dehydroquinate synthase family.</text>
</comment>
<accession>C4LB07</accession>
<name>AROB_TOLAT</name>
<feature type="chain" id="PRO_1000202922" description="3-dehydroquinate synthase">
    <location>
        <begin position="1"/>
        <end position="358"/>
    </location>
</feature>
<feature type="binding site" evidence="1">
    <location>
        <begin position="69"/>
        <end position="74"/>
    </location>
    <ligand>
        <name>NAD(+)</name>
        <dbReference type="ChEBI" id="CHEBI:57540"/>
    </ligand>
</feature>
<feature type="binding site" evidence="1">
    <location>
        <begin position="103"/>
        <end position="107"/>
    </location>
    <ligand>
        <name>NAD(+)</name>
        <dbReference type="ChEBI" id="CHEBI:57540"/>
    </ligand>
</feature>
<feature type="binding site" evidence="1">
    <location>
        <begin position="127"/>
        <end position="128"/>
    </location>
    <ligand>
        <name>NAD(+)</name>
        <dbReference type="ChEBI" id="CHEBI:57540"/>
    </ligand>
</feature>
<feature type="binding site" evidence="1">
    <location>
        <position position="140"/>
    </location>
    <ligand>
        <name>NAD(+)</name>
        <dbReference type="ChEBI" id="CHEBI:57540"/>
    </ligand>
</feature>
<feature type="binding site" evidence="1">
    <location>
        <position position="149"/>
    </location>
    <ligand>
        <name>NAD(+)</name>
        <dbReference type="ChEBI" id="CHEBI:57540"/>
    </ligand>
</feature>
<feature type="binding site" evidence="1">
    <location>
        <begin position="167"/>
        <end position="170"/>
    </location>
    <ligand>
        <name>NAD(+)</name>
        <dbReference type="ChEBI" id="CHEBI:57540"/>
    </ligand>
</feature>
<feature type="binding site" evidence="1">
    <location>
        <position position="182"/>
    </location>
    <ligand>
        <name>Zn(2+)</name>
        <dbReference type="ChEBI" id="CHEBI:29105"/>
    </ligand>
</feature>
<feature type="binding site" evidence="1">
    <location>
        <position position="245"/>
    </location>
    <ligand>
        <name>Zn(2+)</name>
        <dbReference type="ChEBI" id="CHEBI:29105"/>
    </ligand>
</feature>
<feature type="binding site" evidence="1">
    <location>
        <position position="262"/>
    </location>
    <ligand>
        <name>Zn(2+)</name>
        <dbReference type="ChEBI" id="CHEBI:29105"/>
    </ligand>
</feature>